<keyword id="KW-0687">Ribonucleoprotein</keyword>
<keyword id="KW-0689">Ribosomal protein</keyword>
<keyword id="KW-0694">RNA-binding</keyword>
<keyword id="KW-0699">rRNA-binding</keyword>
<accession>C0MCC1</accession>
<comment type="function">
    <text evidence="1">One of two assembly initiator proteins, it binds directly to the 5'-end of the 23S rRNA, where it nucleates assembly of the 50S subunit.</text>
</comment>
<comment type="function">
    <text evidence="1">One of the proteins that surrounds the polypeptide exit tunnel on the outside of the subunit.</text>
</comment>
<comment type="subunit">
    <text evidence="1">Part of the 50S ribosomal subunit.</text>
</comment>
<comment type="similarity">
    <text evidence="1">Belongs to the universal ribosomal protein uL24 family.</text>
</comment>
<sequence length="101" mass="10944">MFVKKGDKVRVIAGKDKGVEAVVLKALPKVNKVIVEGVAIIKKHQKPNSENPQGAIVEKEAPIHASNVQVLDKNGVAGRVGYKFVDGKKVRYNKKSGEVLD</sequence>
<name>RL24_STRS7</name>
<protein>
    <recommendedName>
        <fullName evidence="1">Large ribosomal subunit protein uL24</fullName>
    </recommendedName>
    <alternativeName>
        <fullName evidence="2">50S ribosomal protein L24</fullName>
    </alternativeName>
</protein>
<organism>
    <name type="scientific">Streptococcus equi subsp. zooepidemicus (strain H70)</name>
    <dbReference type="NCBI Taxonomy" id="553483"/>
    <lineage>
        <taxon>Bacteria</taxon>
        <taxon>Bacillati</taxon>
        <taxon>Bacillota</taxon>
        <taxon>Bacilli</taxon>
        <taxon>Lactobacillales</taxon>
        <taxon>Streptococcaceae</taxon>
        <taxon>Streptococcus</taxon>
    </lineage>
</organism>
<reference key="1">
    <citation type="journal article" date="2009" name="PLoS Pathog.">
        <title>Genomic evidence for the evolution of Streptococcus equi: host restriction, increased virulence, and genetic exchange with human pathogens.</title>
        <authorList>
            <person name="Holden M.T.G."/>
            <person name="Heather Z."/>
            <person name="Paillot R."/>
            <person name="Steward K.F."/>
            <person name="Webb K."/>
            <person name="Ainslie F."/>
            <person name="Jourdan T."/>
            <person name="Bason N.C."/>
            <person name="Holroyd N.E."/>
            <person name="Mungall K."/>
            <person name="Quail M.A."/>
            <person name="Sanders M."/>
            <person name="Simmonds M."/>
            <person name="Willey D."/>
            <person name="Brooks K."/>
            <person name="Aanensen D.M."/>
            <person name="Spratt B.G."/>
            <person name="Jolley K.A."/>
            <person name="Maiden M.C.J."/>
            <person name="Kehoe M."/>
            <person name="Chanter N."/>
            <person name="Bentley S.D."/>
            <person name="Robinson C."/>
            <person name="Maskell D.J."/>
            <person name="Parkhill J."/>
            <person name="Waller A.S."/>
        </authorList>
    </citation>
    <scope>NUCLEOTIDE SEQUENCE [LARGE SCALE GENOMIC DNA]</scope>
    <source>
        <strain>H70</strain>
    </source>
</reference>
<proteinExistence type="inferred from homology"/>
<evidence type="ECO:0000255" key="1">
    <source>
        <dbReference type="HAMAP-Rule" id="MF_01326"/>
    </source>
</evidence>
<evidence type="ECO:0000305" key="2"/>
<gene>
    <name evidence="1" type="primary">rplX</name>
    <name type="ordered locus">SZO_00610</name>
</gene>
<dbReference type="EMBL" id="FM204884">
    <property type="protein sequence ID" value="CAW97664.1"/>
    <property type="molecule type" value="Genomic_DNA"/>
</dbReference>
<dbReference type="SMR" id="C0MCC1"/>
<dbReference type="KEGG" id="seq:SZO_00610"/>
<dbReference type="eggNOG" id="COG0198">
    <property type="taxonomic scope" value="Bacteria"/>
</dbReference>
<dbReference type="HOGENOM" id="CLU_093315_2_0_9"/>
<dbReference type="Proteomes" id="UP000001368">
    <property type="component" value="Chromosome"/>
</dbReference>
<dbReference type="GO" id="GO:1990904">
    <property type="term" value="C:ribonucleoprotein complex"/>
    <property type="evidence" value="ECO:0007669"/>
    <property type="project" value="UniProtKB-KW"/>
</dbReference>
<dbReference type="GO" id="GO:0005840">
    <property type="term" value="C:ribosome"/>
    <property type="evidence" value="ECO:0007669"/>
    <property type="project" value="UniProtKB-KW"/>
</dbReference>
<dbReference type="GO" id="GO:0019843">
    <property type="term" value="F:rRNA binding"/>
    <property type="evidence" value="ECO:0007669"/>
    <property type="project" value="UniProtKB-UniRule"/>
</dbReference>
<dbReference type="GO" id="GO:0003735">
    <property type="term" value="F:structural constituent of ribosome"/>
    <property type="evidence" value="ECO:0007669"/>
    <property type="project" value="InterPro"/>
</dbReference>
<dbReference type="GO" id="GO:0006412">
    <property type="term" value="P:translation"/>
    <property type="evidence" value="ECO:0007669"/>
    <property type="project" value="UniProtKB-UniRule"/>
</dbReference>
<dbReference type="CDD" id="cd06089">
    <property type="entry name" value="KOW_RPL26"/>
    <property type="match status" value="1"/>
</dbReference>
<dbReference type="FunFam" id="2.30.30.30:FF:000004">
    <property type="entry name" value="50S ribosomal protein L24"/>
    <property type="match status" value="1"/>
</dbReference>
<dbReference type="Gene3D" id="2.30.30.30">
    <property type="match status" value="1"/>
</dbReference>
<dbReference type="HAMAP" id="MF_01326_B">
    <property type="entry name" value="Ribosomal_uL24_B"/>
    <property type="match status" value="1"/>
</dbReference>
<dbReference type="InterPro" id="IPR005824">
    <property type="entry name" value="KOW"/>
</dbReference>
<dbReference type="InterPro" id="IPR014722">
    <property type="entry name" value="Rib_uL2_dom2"/>
</dbReference>
<dbReference type="InterPro" id="IPR003256">
    <property type="entry name" value="Ribosomal_uL24"/>
</dbReference>
<dbReference type="InterPro" id="IPR005825">
    <property type="entry name" value="Ribosomal_uL24_CS"/>
</dbReference>
<dbReference type="InterPro" id="IPR041988">
    <property type="entry name" value="Ribosomal_uL24_KOW"/>
</dbReference>
<dbReference type="InterPro" id="IPR008991">
    <property type="entry name" value="Translation_prot_SH3-like_sf"/>
</dbReference>
<dbReference type="NCBIfam" id="TIGR01079">
    <property type="entry name" value="rplX_bact"/>
    <property type="match status" value="1"/>
</dbReference>
<dbReference type="PANTHER" id="PTHR12903">
    <property type="entry name" value="MITOCHONDRIAL RIBOSOMAL PROTEIN L24"/>
    <property type="match status" value="1"/>
</dbReference>
<dbReference type="Pfam" id="PF00467">
    <property type="entry name" value="KOW"/>
    <property type="match status" value="1"/>
</dbReference>
<dbReference type="Pfam" id="PF17136">
    <property type="entry name" value="ribosomal_L24"/>
    <property type="match status" value="1"/>
</dbReference>
<dbReference type="SMART" id="SM00739">
    <property type="entry name" value="KOW"/>
    <property type="match status" value="1"/>
</dbReference>
<dbReference type="SUPFAM" id="SSF50104">
    <property type="entry name" value="Translation proteins SH3-like domain"/>
    <property type="match status" value="1"/>
</dbReference>
<dbReference type="PROSITE" id="PS01108">
    <property type="entry name" value="RIBOSOMAL_L24"/>
    <property type="match status" value="1"/>
</dbReference>
<feature type="chain" id="PRO_1000214556" description="Large ribosomal subunit protein uL24">
    <location>
        <begin position="1"/>
        <end position="101"/>
    </location>
</feature>